<comment type="catalytic activity">
    <reaction>
        <text>a myo-inositol phosphate + H2O = myo-inositol + phosphate</text>
        <dbReference type="Rhea" id="RHEA:24056"/>
        <dbReference type="ChEBI" id="CHEBI:15377"/>
        <dbReference type="ChEBI" id="CHEBI:17268"/>
        <dbReference type="ChEBI" id="CHEBI:43474"/>
        <dbReference type="ChEBI" id="CHEBI:84139"/>
        <dbReference type="EC" id="3.1.3.25"/>
    </reaction>
</comment>
<comment type="cofactor">
    <cofactor evidence="1">
        <name>Mg(2+)</name>
        <dbReference type="ChEBI" id="CHEBI:18420"/>
    </cofactor>
</comment>
<comment type="similarity">
    <text evidence="2">Belongs to the inositol monophosphatase superfamily.</text>
</comment>
<evidence type="ECO:0000250" key="1"/>
<evidence type="ECO:0000305" key="2"/>
<name>SUHB_MYCLE</name>
<sequence length="291" mass="29687">MTVPDNDPEQLRCVAESLATEAAAFVRCRRAEVFGTDLGAAGGGAVRAKSTPTDPVTVVDTETERLLRDRLAQLRPGDSILGEEGGGPADLTATPADTVTWVLDPIDGTVNFVYGIPAYAVSVAAQVDGVSVAGAVAEVVAGRVHSAASGLGAHVTDEYGVQVLRCSAVDDLSMALLGTGFAYSVVRRAAQAALLAQMLPVVRDVRRIGSAALDLCMVAAGQLDAYYEHEVQVWDCAAGALIAAEAGACVQLPKRNGPVGGAGLVVAAAPGIADALLAALQRFNGLAPILD</sequence>
<protein>
    <recommendedName>
        <fullName>Inositol-1-monophosphatase</fullName>
        <shortName>I-1-Pase</shortName>
        <shortName>IMPase</shortName>
        <shortName>Inositol-1-phosphatase</shortName>
        <ecNumber>3.1.3.25</ecNumber>
    </recommendedName>
</protein>
<proteinExistence type="inferred from homology"/>
<gene>
    <name type="primary">suhB</name>
    <name type="synonym">ssyA</name>
    <name type="ordered locus">ML1024</name>
</gene>
<accession>P46813</accession>
<organism>
    <name type="scientific">Mycobacterium leprae (strain TN)</name>
    <dbReference type="NCBI Taxonomy" id="272631"/>
    <lineage>
        <taxon>Bacteria</taxon>
        <taxon>Bacillati</taxon>
        <taxon>Actinomycetota</taxon>
        <taxon>Actinomycetes</taxon>
        <taxon>Mycobacteriales</taxon>
        <taxon>Mycobacteriaceae</taxon>
        <taxon>Mycobacterium</taxon>
    </lineage>
</organism>
<reference key="1">
    <citation type="submission" date="1994-09" db="EMBL/GenBank/DDBJ databases">
        <authorList>
            <person name="Smith D.R."/>
            <person name="Robison K."/>
        </authorList>
    </citation>
    <scope>NUCLEOTIDE SEQUENCE [GENOMIC DNA]</scope>
</reference>
<reference key="2">
    <citation type="journal article" date="2001" name="Nature">
        <title>Massive gene decay in the leprosy bacillus.</title>
        <authorList>
            <person name="Cole S.T."/>
            <person name="Eiglmeier K."/>
            <person name="Parkhill J."/>
            <person name="James K.D."/>
            <person name="Thomson N.R."/>
            <person name="Wheeler P.R."/>
            <person name="Honore N."/>
            <person name="Garnier T."/>
            <person name="Churcher C.M."/>
            <person name="Harris D.E."/>
            <person name="Mungall K.L."/>
            <person name="Basham D."/>
            <person name="Brown D."/>
            <person name="Chillingworth T."/>
            <person name="Connor R."/>
            <person name="Davies R.M."/>
            <person name="Devlin K."/>
            <person name="Duthoy S."/>
            <person name="Feltwell T."/>
            <person name="Fraser A."/>
            <person name="Hamlin N."/>
            <person name="Holroyd S."/>
            <person name="Hornsby T."/>
            <person name="Jagels K."/>
            <person name="Lacroix C."/>
            <person name="Maclean J."/>
            <person name="Moule S."/>
            <person name="Murphy L.D."/>
            <person name="Oliver K."/>
            <person name="Quail M.A."/>
            <person name="Rajandream M.A."/>
            <person name="Rutherford K.M."/>
            <person name="Rutter S."/>
            <person name="Seeger K."/>
            <person name="Simon S."/>
            <person name="Simmonds M."/>
            <person name="Skelton J."/>
            <person name="Squares R."/>
            <person name="Squares S."/>
            <person name="Stevens K."/>
            <person name="Taylor K."/>
            <person name="Whitehead S."/>
            <person name="Woodward J.R."/>
            <person name="Barrell B.G."/>
        </authorList>
    </citation>
    <scope>NUCLEOTIDE SEQUENCE [LARGE SCALE GENOMIC DNA]</scope>
    <source>
        <strain>TN</strain>
    </source>
</reference>
<feature type="chain" id="PRO_0000142563" description="Inositol-1-monophosphatase">
    <location>
        <begin position="1"/>
        <end position="291"/>
    </location>
</feature>
<feature type="binding site" evidence="1">
    <location>
        <position position="83"/>
    </location>
    <ligand>
        <name>Mg(2+)</name>
        <dbReference type="ChEBI" id="CHEBI:18420"/>
        <label>1</label>
    </ligand>
</feature>
<feature type="binding site" evidence="1">
    <location>
        <position position="83"/>
    </location>
    <ligand>
        <name>substrate</name>
    </ligand>
</feature>
<feature type="binding site" evidence="1">
    <location>
        <position position="104"/>
    </location>
    <ligand>
        <name>Mg(2+)</name>
        <dbReference type="ChEBI" id="CHEBI:18420"/>
        <label>1</label>
    </ligand>
</feature>
<feature type="binding site" evidence="1">
    <location>
        <position position="104"/>
    </location>
    <ligand>
        <name>Mg(2+)</name>
        <dbReference type="ChEBI" id="CHEBI:18420"/>
        <label>2</label>
    </ligand>
</feature>
<feature type="binding site" evidence="1">
    <location>
        <begin position="106"/>
        <end position="109"/>
    </location>
    <ligand>
        <name>substrate</name>
    </ligand>
</feature>
<feature type="binding site" evidence="1">
    <location>
        <position position="106"/>
    </location>
    <ligand>
        <name>Mg(2+)</name>
        <dbReference type="ChEBI" id="CHEBI:18420"/>
        <label>1</label>
    </ligand>
</feature>
<feature type="binding site" evidence="1">
    <location>
        <position position="107"/>
    </location>
    <ligand>
        <name>Mg(2+)</name>
        <dbReference type="ChEBI" id="CHEBI:18420"/>
        <label>2</label>
    </ligand>
</feature>
<feature type="binding site" evidence="1">
    <location>
        <position position="206"/>
    </location>
    <ligand>
        <name>substrate</name>
    </ligand>
</feature>
<feature type="binding site" evidence="1">
    <location>
        <position position="235"/>
    </location>
    <ligand>
        <name>Mg(2+)</name>
        <dbReference type="ChEBI" id="CHEBI:18420"/>
        <label>2</label>
    </ligand>
</feature>
<feature type="binding site" evidence="1">
    <location>
        <position position="235"/>
    </location>
    <ligand>
        <name>substrate</name>
    </ligand>
</feature>
<keyword id="KW-0378">Hydrolase</keyword>
<keyword id="KW-0460">Magnesium</keyword>
<keyword id="KW-0479">Metal-binding</keyword>
<keyword id="KW-1185">Reference proteome</keyword>
<dbReference type="EC" id="3.1.3.25"/>
<dbReference type="EMBL" id="U15181">
    <property type="protein sequence ID" value="AAA62956.1"/>
    <property type="molecule type" value="Genomic_DNA"/>
</dbReference>
<dbReference type="EMBL" id="AL583920">
    <property type="protein sequence ID" value="CAC31405.1"/>
    <property type="molecule type" value="Genomic_DNA"/>
</dbReference>
<dbReference type="PIR" id="B87037">
    <property type="entry name" value="B87037"/>
</dbReference>
<dbReference type="RefSeq" id="NP_301757.1">
    <property type="nucleotide sequence ID" value="NC_002677.1"/>
</dbReference>
<dbReference type="RefSeq" id="WP_010908081.1">
    <property type="nucleotide sequence ID" value="NC_002677.1"/>
</dbReference>
<dbReference type="SMR" id="P46813"/>
<dbReference type="STRING" id="272631.gene:17574850"/>
<dbReference type="KEGG" id="mle:ML1024"/>
<dbReference type="PATRIC" id="fig|272631.5.peg.1853"/>
<dbReference type="Leproma" id="ML1024"/>
<dbReference type="eggNOG" id="COG0483">
    <property type="taxonomic scope" value="Bacteria"/>
</dbReference>
<dbReference type="HOGENOM" id="CLU_044118_0_1_11"/>
<dbReference type="OrthoDB" id="9772456at2"/>
<dbReference type="Proteomes" id="UP000000806">
    <property type="component" value="Chromosome"/>
</dbReference>
<dbReference type="GO" id="GO:0008934">
    <property type="term" value="F:inositol monophosphate 1-phosphatase activity"/>
    <property type="evidence" value="ECO:0007669"/>
    <property type="project" value="TreeGrafter"/>
</dbReference>
<dbReference type="GO" id="GO:0046872">
    <property type="term" value="F:metal ion binding"/>
    <property type="evidence" value="ECO:0007669"/>
    <property type="project" value="UniProtKB-KW"/>
</dbReference>
<dbReference type="GO" id="GO:0006020">
    <property type="term" value="P:inositol metabolic process"/>
    <property type="evidence" value="ECO:0007669"/>
    <property type="project" value="TreeGrafter"/>
</dbReference>
<dbReference type="GO" id="GO:0046854">
    <property type="term" value="P:phosphatidylinositol phosphate biosynthetic process"/>
    <property type="evidence" value="ECO:0007669"/>
    <property type="project" value="InterPro"/>
</dbReference>
<dbReference type="GO" id="GO:0007165">
    <property type="term" value="P:signal transduction"/>
    <property type="evidence" value="ECO:0007669"/>
    <property type="project" value="TreeGrafter"/>
</dbReference>
<dbReference type="FunFam" id="3.40.190.80:FF:000022">
    <property type="entry name" value="Inositol-1-monophosphatase"/>
    <property type="match status" value="1"/>
</dbReference>
<dbReference type="Gene3D" id="3.40.190.80">
    <property type="match status" value="1"/>
</dbReference>
<dbReference type="Gene3D" id="3.30.540.10">
    <property type="entry name" value="Fructose-1,6-Bisphosphatase, subunit A, domain 1"/>
    <property type="match status" value="1"/>
</dbReference>
<dbReference type="InterPro" id="IPR020583">
    <property type="entry name" value="Inositol_monoP_metal-BS"/>
</dbReference>
<dbReference type="InterPro" id="IPR000760">
    <property type="entry name" value="Inositol_monophosphatase-like"/>
</dbReference>
<dbReference type="InterPro" id="IPR020550">
    <property type="entry name" value="Inositol_monophosphatase_CS"/>
</dbReference>
<dbReference type="PANTHER" id="PTHR20854">
    <property type="entry name" value="INOSITOL MONOPHOSPHATASE"/>
    <property type="match status" value="1"/>
</dbReference>
<dbReference type="PANTHER" id="PTHR20854:SF4">
    <property type="entry name" value="INOSITOL-1-MONOPHOSPHATASE-RELATED"/>
    <property type="match status" value="1"/>
</dbReference>
<dbReference type="Pfam" id="PF00459">
    <property type="entry name" value="Inositol_P"/>
    <property type="match status" value="1"/>
</dbReference>
<dbReference type="PRINTS" id="PR00377">
    <property type="entry name" value="IMPHPHTASES"/>
</dbReference>
<dbReference type="SUPFAM" id="SSF56655">
    <property type="entry name" value="Carbohydrate phosphatase"/>
    <property type="match status" value="1"/>
</dbReference>
<dbReference type="PROSITE" id="PS00629">
    <property type="entry name" value="IMP_1"/>
    <property type="match status" value="1"/>
</dbReference>
<dbReference type="PROSITE" id="PS00630">
    <property type="entry name" value="IMP_2"/>
    <property type="match status" value="1"/>
</dbReference>